<name>RL19_STRU0</name>
<proteinExistence type="inferred from homology"/>
<evidence type="ECO:0000255" key="1">
    <source>
        <dbReference type="HAMAP-Rule" id="MF_00402"/>
    </source>
</evidence>
<evidence type="ECO:0000305" key="2"/>
<feature type="chain" id="PRO_1000193902" description="Large ribosomal subunit protein bL19">
    <location>
        <begin position="1"/>
        <end position="115"/>
    </location>
</feature>
<organism>
    <name type="scientific">Streptococcus uberis (strain ATCC BAA-854 / 0140J)</name>
    <dbReference type="NCBI Taxonomy" id="218495"/>
    <lineage>
        <taxon>Bacteria</taxon>
        <taxon>Bacillati</taxon>
        <taxon>Bacillota</taxon>
        <taxon>Bacilli</taxon>
        <taxon>Lactobacillales</taxon>
        <taxon>Streptococcaceae</taxon>
        <taxon>Streptococcus</taxon>
    </lineage>
</organism>
<dbReference type="EMBL" id="AM946015">
    <property type="protein sequence ID" value="CAR41494.1"/>
    <property type="molecule type" value="Genomic_DNA"/>
</dbReference>
<dbReference type="RefSeq" id="WP_001068667.1">
    <property type="nucleotide sequence ID" value="NC_012004.1"/>
</dbReference>
<dbReference type="SMR" id="B9DRQ9"/>
<dbReference type="STRING" id="218495.SUB0644"/>
<dbReference type="GeneID" id="93825928"/>
<dbReference type="KEGG" id="sub:SUB0644"/>
<dbReference type="eggNOG" id="COG0335">
    <property type="taxonomic scope" value="Bacteria"/>
</dbReference>
<dbReference type="HOGENOM" id="CLU_103507_2_1_9"/>
<dbReference type="OrthoDB" id="9803541at2"/>
<dbReference type="Proteomes" id="UP000000449">
    <property type="component" value="Chromosome"/>
</dbReference>
<dbReference type="GO" id="GO:0022625">
    <property type="term" value="C:cytosolic large ribosomal subunit"/>
    <property type="evidence" value="ECO:0007669"/>
    <property type="project" value="TreeGrafter"/>
</dbReference>
<dbReference type="GO" id="GO:0003735">
    <property type="term" value="F:structural constituent of ribosome"/>
    <property type="evidence" value="ECO:0007669"/>
    <property type="project" value="InterPro"/>
</dbReference>
<dbReference type="GO" id="GO:0006412">
    <property type="term" value="P:translation"/>
    <property type="evidence" value="ECO:0007669"/>
    <property type="project" value="UniProtKB-UniRule"/>
</dbReference>
<dbReference type="FunFam" id="2.30.30.790:FF:000001">
    <property type="entry name" value="50S ribosomal protein L19"/>
    <property type="match status" value="1"/>
</dbReference>
<dbReference type="Gene3D" id="2.30.30.790">
    <property type="match status" value="1"/>
</dbReference>
<dbReference type="HAMAP" id="MF_00402">
    <property type="entry name" value="Ribosomal_bL19"/>
    <property type="match status" value="1"/>
</dbReference>
<dbReference type="InterPro" id="IPR001857">
    <property type="entry name" value="Ribosomal_bL19"/>
</dbReference>
<dbReference type="InterPro" id="IPR018257">
    <property type="entry name" value="Ribosomal_bL19_CS"/>
</dbReference>
<dbReference type="InterPro" id="IPR038657">
    <property type="entry name" value="Ribosomal_bL19_sf"/>
</dbReference>
<dbReference type="InterPro" id="IPR008991">
    <property type="entry name" value="Translation_prot_SH3-like_sf"/>
</dbReference>
<dbReference type="NCBIfam" id="TIGR01024">
    <property type="entry name" value="rplS_bact"/>
    <property type="match status" value="1"/>
</dbReference>
<dbReference type="PANTHER" id="PTHR15680:SF9">
    <property type="entry name" value="LARGE RIBOSOMAL SUBUNIT PROTEIN BL19M"/>
    <property type="match status" value="1"/>
</dbReference>
<dbReference type="PANTHER" id="PTHR15680">
    <property type="entry name" value="RIBOSOMAL PROTEIN L19"/>
    <property type="match status" value="1"/>
</dbReference>
<dbReference type="Pfam" id="PF01245">
    <property type="entry name" value="Ribosomal_L19"/>
    <property type="match status" value="1"/>
</dbReference>
<dbReference type="PIRSF" id="PIRSF002191">
    <property type="entry name" value="Ribosomal_L19"/>
    <property type="match status" value="1"/>
</dbReference>
<dbReference type="PRINTS" id="PR00061">
    <property type="entry name" value="RIBOSOMALL19"/>
</dbReference>
<dbReference type="SUPFAM" id="SSF50104">
    <property type="entry name" value="Translation proteins SH3-like domain"/>
    <property type="match status" value="1"/>
</dbReference>
<dbReference type="PROSITE" id="PS01015">
    <property type="entry name" value="RIBOSOMAL_L19"/>
    <property type="match status" value="1"/>
</dbReference>
<sequence length="115" mass="13146">MNPLIQSLTEGQLRSDIPEFRAGDTVRVHAKVVEGTRERIQIFEGVVISRKGQGISEMYTVRKISGGIGVERTFPIHTPRVDKIEVVRYGKVRRAKLYYLRALQGKAARIKEIRR</sequence>
<reference key="1">
    <citation type="journal article" date="2009" name="BMC Genomics">
        <title>Evidence for niche adaptation in the genome of the bovine pathogen Streptococcus uberis.</title>
        <authorList>
            <person name="Ward P.N."/>
            <person name="Holden M.T.G."/>
            <person name="Leigh J.A."/>
            <person name="Lennard N."/>
            <person name="Bignell A."/>
            <person name="Barron A."/>
            <person name="Clark L."/>
            <person name="Quail M.A."/>
            <person name="Woodward J."/>
            <person name="Barrell B.G."/>
            <person name="Egan S.A."/>
            <person name="Field T.R."/>
            <person name="Maskell D."/>
            <person name="Kehoe M."/>
            <person name="Dowson C.G."/>
            <person name="Chanter N."/>
            <person name="Whatmore A.M."/>
            <person name="Bentley S.D."/>
            <person name="Parkhill J."/>
        </authorList>
    </citation>
    <scope>NUCLEOTIDE SEQUENCE [LARGE SCALE GENOMIC DNA]</scope>
    <source>
        <strain>ATCC BAA-854 / 0140J</strain>
    </source>
</reference>
<protein>
    <recommendedName>
        <fullName evidence="1">Large ribosomal subunit protein bL19</fullName>
    </recommendedName>
    <alternativeName>
        <fullName evidence="2">50S ribosomal protein L19</fullName>
    </alternativeName>
</protein>
<gene>
    <name evidence="1" type="primary">rplS</name>
    <name type="ordered locus">SUB0644</name>
</gene>
<comment type="function">
    <text evidence="1">This protein is located at the 30S-50S ribosomal subunit interface and may play a role in the structure and function of the aminoacyl-tRNA binding site.</text>
</comment>
<comment type="similarity">
    <text evidence="1">Belongs to the bacterial ribosomal protein bL19 family.</text>
</comment>
<keyword id="KW-1185">Reference proteome</keyword>
<keyword id="KW-0687">Ribonucleoprotein</keyword>
<keyword id="KW-0689">Ribosomal protein</keyword>
<accession>B9DRQ9</accession>